<protein>
    <recommendedName>
        <fullName>Store-operated calcium entry-associated regulatory factor</fullName>
        <shortName>SARAF</shortName>
        <shortName>SOCE-associated regulatory factor</shortName>
    </recommendedName>
    <alternativeName>
        <fullName>Transmembrane protein 66</fullName>
    </alternativeName>
</protein>
<comment type="function">
    <text evidence="1">Negative regulator of store-operated Ca(2+) entry (SOCE) involved in protecting cells from Ca(2+) overfilling. In response to cytosolic Ca(2+) elevation after endoplasmic reticulum Ca(2+) refilling, promotes a slow inactivation of STIM (stim1 or stim2)-dependent SOCE activity (By similarity).</text>
</comment>
<comment type="subcellular location">
    <subcellularLocation>
        <location evidence="1">Endoplasmic reticulum membrane</location>
        <topology evidence="1">Single-pass type I membrane protein</topology>
    </subcellularLocation>
    <text evidence="1">Translocates to the endoplasmic reticulum-plasma membrane (ER-PM) region in a STIM1-dependent manner following cytosolic Ca(2+) elevation.</text>
</comment>
<comment type="similarity">
    <text evidence="4">Belongs to the SARAF family.</text>
</comment>
<accession>F7C1E2</accession>
<dbReference type="EMBL" id="AAMC01129898">
    <property type="status" value="NOT_ANNOTATED_CDS"/>
    <property type="molecule type" value="Genomic_DNA"/>
</dbReference>
<dbReference type="SMR" id="F7C1E2"/>
<dbReference type="FunCoup" id="F7C1E2">
    <property type="interactions" value="676"/>
</dbReference>
<dbReference type="STRING" id="8364.ENSXETP00000019867"/>
<dbReference type="PaxDb" id="8364-ENSXETP00000055286"/>
<dbReference type="eggNOG" id="ENOG502QT6Y">
    <property type="taxonomic scope" value="Eukaryota"/>
</dbReference>
<dbReference type="HOGENOM" id="CLU_046802_0_1_1"/>
<dbReference type="InParanoid" id="F7C1E2"/>
<dbReference type="Proteomes" id="UP000008143">
    <property type="component" value="Unplaced"/>
</dbReference>
<dbReference type="GO" id="GO:0005789">
    <property type="term" value="C:endoplasmic reticulum membrane"/>
    <property type="evidence" value="ECO:0000250"/>
    <property type="project" value="UniProtKB"/>
</dbReference>
<dbReference type="GO" id="GO:0140268">
    <property type="term" value="C:endoplasmic reticulum-plasma membrane contact site"/>
    <property type="evidence" value="ECO:0000250"/>
    <property type="project" value="UniProtKB"/>
</dbReference>
<dbReference type="GO" id="GO:0006816">
    <property type="term" value="P:calcium ion transport"/>
    <property type="evidence" value="ECO:0007669"/>
    <property type="project" value="UniProtKB-KW"/>
</dbReference>
<dbReference type="GO" id="GO:2001256">
    <property type="term" value="P:regulation of store-operated calcium entry"/>
    <property type="evidence" value="ECO:0000250"/>
    <property type="project" value="UniProtKB"/>
</dbReference>
<dbReference type="InterPro" id="IPR009567">
    <property type="entry name" value="SARAF"/>
</dbReference>
<dbReference type="PANTHER" id="PTHR15929">
    <property type="entry name" value="STORE-OPERATED CALCIUM ENTRY-ASSOCIATED REGULATORY FACTOR"/>
    <property type="match status" value="1"/>
</dbReference>
<dbReference type="PANTHER" id="PTHR15929:SF0">
    <property type="entry name" value="STORE-OPERATED CALCIUM ENTRY-ASSOCIATED REGULATORY FACTOR"/>
    <property type="match status" value="1"/>
</dbReference>
<dbReference type="Pfam" id="PF06682">
    <property type="entry name" value="SARAF"/>
    <property type="match status" value="1"/>
</dbReference>
<organism>
    <name type="scientific">Xenopus tropicalis</name>
    <name type="common">Western clawed frog</name>
    <name type="synonym">Silurana tropicalis</name>
    <dbReference type="NCBI Taxonomy" id="8364"/>
    <lineage>
        <taxon>Eukaryota</taxon>
        <taxon>Metazoa</taxon>
        <taxon>Chordata</taxon>
        <taxon>Craniata</taxon>
        <taxon>Vertebrata</taxon>
        <taxon>Euteleostomi</taxon>
        <taxon>Amphibia</taxon>
        <taxon>Batrachia</taxon>
        <taxon>Anura</taxon>
        <taxon>Pipoidea</taxon>
        <taxon>Pipidae</taxon>
        <taxon>Xenopodinae</taxon>
        <taxon>Xenopus</taxon>
        <taxon>Silurana</taxon>
    </lineage>
</organism>
<name>SARAF_XENTR</name>
<proteinExistence type="inferred from homology"/>
<gene>
    <name type="primary">saraf</name>
    <name type="synonym">tmem66</name>
</gene>
<feature type="signal peptide" evidence="2">
    <location>
        <begin position="1"/>
        <end position="26"/>
    </location>
</feature>
<feature type="chain" id="PRO_0000417518" description="Store-operated calcium entry-associated regulatory factor">
    <location>
        <begin position="27"/>
        <end position="319"/>
    </location>
</feature>
<feature type="topological domain" description="Lumenal" evidence="2">
    <location>
        <begin position="27"/>
        <end position="171"/>
    </location>
</feature>
<feature type="transmembrane region" description="Helical" evidence="2">
    <location>
        <begin position="172"/>
        <end position="192"/>
    </location>
</feature>
<feature type="topological domain" description="Cytoplasmic" evidence="2">
    <location>
        <begin position="193"/>
        <end position="319"/>
    </location>
</feature>
<feature type="region of interest" description="Disordered" evidence="3">
    <location>
        <begin position="200"/>
        <end position="221"/>
    </location>
</feature>
<feature type="region of interest" description="Disordered" evidence="3">
    <location>
        <begin position="292"/>
        <end position="319"/>
    </location>
</feature>
<feature type="compositionally biased region" description="Polar residues" evidence="3">
    <location>
        <begin position="292"/>
        <end position="308"/>
    </location>
</feature>
<sequence>MVEVANMWSLLLLPLLALLQIPGAWCWNHQERVLLRDIQAITLYADRYTNARRSAPVPQLKCIGGSAGCHTMVPQVVQCHNRGWDGFDVQWECKVDMDNSYRFGKVEVSCEGFDYPEDPYVLRGSCGLEYTLELTEEGRKRSQDGYRSGGFGSGYFQSNSNSWDTKTNGSSAIVLIVIVIIAYGVYKLFLSGPSVQEHPRPDEYGYDFQSQTRASAPPPPGFKSDFTDPHLCKIFGASKSFSSGYGTSHSNQGPGFWTGLGTGGVLGYLFGNRRAQPYQAPYFNTWTGPSNSDSMHQNYRPPQSSGVRTASGFGGTKRR</sequence>
<reference key="1">
    <citation type="journal article" date="2010" name="Science">
        <title>The genome of the Western clawed frog Xenopus tropicalis.</title>
        <authorList>
            <person name="Hellsten U."/>
            <person name="Harland R.M."/>
            <person name="Gilchrist M.J."/>
            <person name="Hendrix D."/>
            <person name="Jurka J."/>
            <person name="Kapitonov V."/>
            <person name="Ovcharenko I."/>
            <person name="Putnam N.H."/>
            <person name="Shu S."/>
            <person name="Taher L."/>
            <person name="Blitz I.L."/>
            <person name="Blumberg B."/>
            <person name="Dichmann D.S."/>
            <person name="Dubchak I."/>
            <person name="Amaya E."/>
            <person name="Detter J.C."/>
            <person name="Fletcher R."/>
            <person name="Gerhard D.S."/>
            <person name="Goodstein D."/>
            <person name="Graves T."/>
            <person name="Grigoriev I.V."/>
            <person name="Grimwood J."/>
            <person name="Kawashima T."/>
            <person name="Lindquist E."/>
            <person name="Lucas S.M."/>
            <person name="Mead P.E."/>
            <person name="Mitros T."/>
            <person name="Ogino H."/>
            <person name="Ohta Y."/>
            <person name="Poliakov A.V."/>
            <person name="Pollet N."/>
            <person name="Robert J."/>
            <person name="Salamov A."/>
            <person name="Sater A.K."/>
            <person name="Schmutz J."/>
            <person name="Terry A."/>
            <person name="Vize P.D."/>
            <person name="Warren W.C."/>
            <person name="Wells D."/>
            <person name="Wills A."/>
            <person name="Wilson R.K."/>
            <person name="Zimmerman L.B."/>
            <person name="Zorn A.M."/>
            <person name="Grainger R."/>
            <person name="Grammer T."/>
            <person name="Khokha M.K."/>
            <person name="Richardson P.M."/>
            <person name="Rokhsar D.S."/>
        </authorList>
    </citation>
    <scope>NUCLEOTIDE SEQUENCE [LARGE SCALE GENOMIC DNA]</scope>
</reference>
<evidence type="ECO:0000250" key="1"/>
<evidence type="ECO:0000255" key="2"/>
<evidence type="ECO:0000256" key="3">
    <source>
        <dbReference type="SAM" id="MobiDB-lite"/>
    </source>
</evidence>
<evidence type="ECO:0000305" key="4"/>
<keyword id="KW-0106">Calcium</keyword>
<keyword id="KW-0109">Calcium transport</keyword>
<keyword id="KW-0256">Endoplasmic reticulum</keyword>
<keyword id="KW-0406">Ion transport</keyword>
<keyword id="KW-0472">Membrane</keyword>
<keyword id="KW-1185">Reference proteome</keyword>
<keyword id="KW-0732">Signal</keyword>
<keyword id="KW-0812">Transmembrane</keyword>
<keyword id="KW-1133">Transmembrane helix</keyword>
<keyword id="KW-0813">Transport</keyword>